<dbReference type="EC" id="1.14.11.8" evidence="3"/>
<dbReference type="EMBL" id="AJ851387">
    <property type="protein sequence ID" value="CAH65021.1"/>
    <property type="molecule type" value="mRNA"/>
</dbReference>
<dbReference type="RefSeq" id="NP_001012593.1">
    <property type="nucleotide sequence ID" value="NM_001012575.2"/>
</dbReference>
<dbReference type="RefSeq" id="XP_015133768.1">
    <property type="nucleotide sequence ID" value="XM_015278282.1"/>
</dbReference>
<dbReference type="RefSeq" id="XP_015133769.1">
    <property type="nucleotide sequence ID" value="XM_015278283.1"/>
</dbReference>
<dbReference type="RefSeq" id="XP_015133770.1">
    <property type="nucleotide sequence ID" value="XM_015278284.1"/>
</dbReference>
<dbReference type="RefSeq" id="XP_040554772.1">
    <property type="nucleotide sequence ID" value="XM_040698838.2"/>
</dbReference>
<dbReference type="RefSeq" id="XP_040554773.1">
    <property type="nucleotide sequence ID" value="XM_040698839.2"/>
</dbReference>
<dbReference type="RefSeq" id="XP_046771784.1">
    <property type="nucleotide sequence ID" value="XM_046915828.1"/>
</dbReference>
<dbReference type="RefSeq" id="XP_046771785.1">
    <property type="nucleotide sequence ID" value="XM_046915829.1"/>
</dbReference>
<dbReference type="RefSeq" id="XP_046771786.1">
    <property type="nucleotide sequence ID" value="XM_046915830.1"/>
</dbReference>
<dbReference type="RefSeq" id="XP_046795983.1">
    <property type="nucleotide sequence ID" value="XM_046940027.1"/>
</dbReference>
<dbReference type="RefSeq" id="XP_046795984.1">
    <property type="nucleotide sequence ID" value="XM_046940028.1"/>
</dbReference>
<dbReference type="SMR" id="Q5F4B3"/>
<dbReference type="FunCoup" id="Q5F4B3">
    <property type="interactions" value="39"/>
</dbReference>
<dbReference type="STRING" id="9031.ENSGALP00000072195"/>
<dbReference type="PaxDb" id="9031-ENSGALP00000012029"/>
<dbReference type="Ensembl" id="ENSGALT00010036622.1">
    <property type="protein sequence ID" value="ENSGALP00010021355.1"/>
    <property type="gene ID" value="ENSGALG00010015194.1"/>
</dbReference>
<dbReference type="GeneID" id="422296"/>
<dbReference type="KEGG" id="gga:422296"/>
<dbReference type="CTD" id="55217"/>
<dbReference type="VEuPathDB" id="HostDB:geneid_422296"/>
<dbReference type="eggNOG" id="KOG3889">
    <property type="taxonomic scope" value="Eukaryota"/>
</dbReference>
<dbReference type="GeneTree" id="ENSGT00530000063582"/>
<dbReference type="HOGENOM" id="CLU_021859_2_0_1"/>
<dbReference type="InParanoid" id="Q5F4B3"/>
<dbReference type="OrthoDB" id="408743at2759"/>
<dbReference type="PhylomeDB" id="Q5F4B3"/>
<dbReference type="TreeFam" id="TF313805"/>
<dbReference type="Reactome" id="R-GGA-71262">
    <property type="pathway name" value="Carnitine synthesis"/>
</dbReference>
<dbReference type="UniPathway" id="UPA00118"/>
<dbReference type="PRO" id="PR:Q5F4B3"/>
<dbReference type="Proteomes" id="UP000000539">
    <property type="component" value="Chromosome 4"/>
</dbReference>
<dbReference type="Bgee" id="ENSGALG00000007443">
    <property type="expression patterns" value="Expressed in kidney and 12 other cell types or tissues"/>
</dbReference>
<dbReference type="GO" id="GO:0005759">
    <property type="term" value="C:mitochondrial matrix"/>
    <property type="evidence" value="ECO:0007669"/>
    <property type="project" value="UniProtKB-SubCell"/>
</dbReference>
<dbReference type="GO" id="GO:0005739">
    <property type="term" value="C:mitochondrion"/>
    <property type="evidence" value="ECO:0000318"/>
    <property type="project" value="GO_Central"/>
</dbReference>
<dbReference type="GO" id="GO:0005506">
    <property type="term" value="F:iron ion binding"/>
    <property type="evidence" value="ECO:0007669"/>
    <property type="project" value="InterPro"/>
</dbReference>
<dbReference type="GO" id="GO:0050353">
    <property type="term" value="F:trimethyllysine dioxygenase activity"/>
    <property type="evidence" value="ECO:0000250"/>
    <property type="project" value="UniProtKB"/>
</dbReference>
<dbReference type="GO" id="GO:0045329">
    <property type="term" value="P:carnitine biosynthetic process"/>
    <property type="evidence" value="ECO:0000250"/>
    <property type="project" value="UniProtKB"/>
</dbReference>
<dbReference type="CDD" id="cd00250">
    <property type="entry name" value="CAS_like"/>
    <property type="match status" value="1"/>
</dbReference>
<dbReference type="FunFam" id="3.60.130.10:FF:000001">
    <property type="entry name" value="Trimethyllysine dioxygenase, mitochondrial"/>
    <property type="match status" value="1"/>
</dbReference>
<dbReference type="FunFam" id="3.30.2020.30:FF:000003">
    <property type="entry name" value="trimethyllysine dioxygenase, mitochondrial isoform X1"/>
    <property type="match status" value="1"/>
</dbReference>
<dbReference type="Gene3D" id="3.30.2020.30">
    <property type="match status" value="1"/>
</dbReference>
<dbReference type="Gene3D" id="3.60.130.10">
    <property type="entry name" value="Clavaminate synthase-like"/>
    <property type="match status" value="1"/>
</dbReference>
<dbReference type="InterPro" id="IPR050411">
    <property type="entry name" value="AlphaKG_dependent_hydroxylases"/>
</dbReference>
<dbReference type="InterPro" id="IPR010376">
    <property type="entry name" value="GBBH-like_N"/>
</dbReference>
<dbReference type="InterPro" id="IPR038492">
    <property type="entry name" value="GBBH-like_N_sf"/>
</dbReference>
<dbReference type="InterPro" id="IPR042098">
    <property type="entry name" value="TauD-like_sf"/>
</dbReference>
<dbReference type="InterPro" id="IPR003819">
    <property type="entry name" value="TauD/TfdA-like"/>
</dbReference>
<dbReference type="InterPro" id="IPR012776">
    <property type="entry name" value="Trimethyllysine_dOase"/>
</dbReference>
<dbReference type="NCBIfam" id="TIGR02410">
    <property type="entry name" value="carnitine_TMLD"/>
    <property type="match status" value="1"/>
</dbReference>
<dbReference type="PANTHER" id="PTHR10696">
    <property type="entry name" value="GAMMA-BUTYROBETAINE HYDROXYLASE-RELATED"/>
    <property type="match status" value="1"/>
</dbReference>
<dbReference type="PANTHER" id="PTHR10696:SF51">
    <property type="entry name" value="TRIMETHYLLYSINE DIOXYGENASE, MITOCHONDRIAL"/>
    <property type="match status" value="1"/>
</dbReference>
<dbReference type="Pfam" id="PF06155">
    <property type="entry name" value="GBBH-like_N"/>
    <property type="match status" value="1"/>
</dbReference>
<dbReference type="Pfam" id="PF02668">
    <property type="entry name" value="TauD"/>
    <property type="match status" value="1"/>
</dbReference>
<dbReference type="SUPFAM" id="SSF51197">
    <property type="entry name" value="Clavaminate synthase-like"/>
    <property type="match status" value="1"/>
</dbReference>
<proteinExistence type="evidence at transcript level"/>
<gene>
    <name type="primary">TMLHE</name>
    <name type="ORF">RCJMB04_1d18</name>
</gene>
<reference key="1">
    <citation type="journal article" date="2005" name="Genome Biol.">
        <title>Full-length cDNAs from chicken bursal lymphocytes to facilitate gene function analysis.</title>
        <authorList>
            <person name="Caldwell R.B."/>
            <person name="Kierzek A.M."/>
            <person name="Arakawa H."/>
            <person name="Bezzubov Y."/>
            <person name="Zaim J."/>
            <person name="Fiedler P."/>
            <person name="Kutter S."/>
            <person name="Blagodatski A."/>
            <person name="Kostovska D."/>
            <person name="Koter M."/>
            <person name="Plachy J."/>
            <person name="Carninci P."/>
            <person name="Hayashizaki Y."/>
            <person name="Buerstedde J.-M."/>
        </authorList>
    </citation>
    <scope>NUCLEOTIDE SEQUENCE [LARGE SCALE MRNA]</scope>
    <source>
        <strain>CB</strain>
        <tissue>Bursa of Fabricius</tissue>
    </source>
</reference>
<feature type="transit peptide" description="Mitochondrion" evidence="4">
    <location>
        <begin position="1"/>
        <end status="unknown"/>
    </location>
</feature>
<feature type="chain" id="PRO_0000260157" description="Trimethyllysine dioxygenase, mitochondrial">
    <location>
        <begin status="unknown"/>
        <end position="418"/>
    </location>
</feature>
<feature type="binding site" evidence="1">
    <location>
        <position position="239"/>
    </location>
    <ligand>
        <name>Fe cation</name>
        <dbReference type="ChEBI" id="CHEBI:24875"/>
        <note>catalytic</note>
    </ligand>
</feature>
<feature type="binding site" evidence="1">
    <location>
        <position position="241"/>
    </location>
    <ligand>
        <name>Fe cation</name>
        <dbReference type="ChEBI" id="CHEBI:24875"/>
        <note>catalytic</note>
    </ligand>
</feature>
<feature type="binding site" evidence="1">
    <location>
        <position position="386"/>
    </location>
    <ligand>
        <name>Fe cation</name>
        <dbReference type="ChEBI" id="CHEBI:24875"/>
        <note>catalytic</note>
    </ligand>
</feature>
<sequence length="418" mass="48656">MWCRRLACLLSVPCQHTRHRLLGPSCGRRTFTAAVARWHHTAPESLSCAWQLHGDHLELRYADTLMRFDFVWLRDHCRSASCYNAKTNQRSLDTASVDLSIKPKAVRVDETTLFLTWPDGHVTRYGLQWLVKNSYEGQKQQVMHPRILWNAEIYRQAQVPSVDCQSFLETDEGLKEFLQNFLLYGIAFVENVTPTKEDTQILAERISLIRETIYGRMWYFTSDFSRGDTAYTKLALDRHTDTTYFQEPCGIQVFHCLKHEGTGGRTLLVDGFYAAEQVLRQAPDQFELLSKVPLKHEYIENVGDCHNHMIGVGPVLNVYPWNNELYLIRYNNYDRAVINTVPYDVVNRWYTAHRTLTTELRRPENELWVKLKPGKALFIDNWRVLHGREAFTGYRQLCGCYLTRDDVLNTARLLGLQA</sequence>
<accession>Q5F4B3</accession>
<protein>
    <recommendedName>
        <fullName>Trimethyllysine dioxygenase, mitochondrial</fullName>
        <ecNumber evidence="3">1.14.11.8</ecNumber>
    </recommendedName>
    <alternativeName>
        <fullName>Epsilon-trimethyllysine 2-oxoglutarate dioxygenase</fullName>
    </alternativeName>
    <alternativeName>
        <fullName>TML hydroxylase</fullName>
    </alternativeName>
    <alternativeName>
        <fullName>TML-alpha-ketoglutarate dioxygenase</fullName>
        <shortName>TML dioxygenase</shortName>
        <shortName>TMLD</shortName>
    </alternativeName>
</protein>
<name>TMLH_CHICK</name>
<comment type="function">
    <text evidence="3">Converts trimethyllysine (TML) into hydroxytrimethyllysine (HTML).</text>
</comment>
<comment type="catalytic activity">
    <reaction evidence="3">
        <text>N(6),N(6),N(6)-trimethyl-L-lysine + 2-oxoglutarate + O2 = (3S)-3-hydroxy-N(6),N(6),N(6)-trimethyl-L-lysine + succinate + CO2</text>
        <dbReference type="Rhea" id="RHEA:14181"/>
        <dbReference type="ChEBI" id="CHEBI:15379"/>
        <dbReference type="ChEBI" id="CHEBI:16526"/>
        <dbReference type="ChEBI" id="CHEBI:16810"/>
        <dbReference type="ChEBI" id="CHEBI:30031"/>
        <dbReference type="ChEBI" id="CHEBI:58100"/>
        <dbReference type="ChEBI" id="CHEBI:141499"/>
        <dbReference type="EC" id="1.14.11.8"/>
    </reaction>
</comment>
<comment type="cofactor">
    <cofactor evidence="1">
        <name>Fe(2+)</name>
        <dbReference type="ChEBI" id="CHEBI:29033"/>
    </cofactor>
    <text evidence="1">Binds 1 Fe(2+) ion per subunit.</text>
</comment>
<comment type="cofactor">
    <cofactor evidence="1">
        <name>L-ascorbate</name>
        <dbReference type="ChEBI" id="CHEBI:38290"/>
    </cofactor>
</comment>
<comment type="pathway">
    <text>Amine and polyamine biosynthesis; carnitine biosynthesis.</text>
</comment>
<comment type="subunit">
    <text evidence="2">Homodimer.</text>
</comment>
<comment type="subcellular location">
    <subcellularLocation>
        <location evidence="3">Mitochondrion matrix</location>
    </subcellularLocation>
</comment>
<comment type="similarity">
    <text evidence="5">Belongs to the gamma-BBH/TMLD family.</text>
</comment>
<keyword id="KW-0124">Carnitine biosynthesis</keyword>
<keyword id="KW-0223">Dioxygenase</keyword>
<keyword id="KW-0408">Iron</keyword>
<keyword id="KW-0479">Metal-binding</keyword>
<keyword id="KW-0496">Mitochondrion</keyword>
<keyword id="KW-0560">Oxidoreductase</keyword>
<keyword id="KW-1185">Reference proteome</keyword>
<keyword id="KW-0809">Transit peptide</keyword>
<organism>
    <name type="scientific">Gallus gallus</name>
    <name type="common">Chicken</name>
    <dbReference type="NCBI Taxonomy" id="9031"/>
    <lineage>
        <taxon>Eukaryota</taxon>
        <taxon>Metazoa</taxon>
        <taxon>Chordata</taxon>
        <taxon>Craniata</taxon>
        <taxon>Vertebrata</taxon>
        <taxon>Euteleostomi</taxon>
        <taxon>Archelosauria</taxon>
        <taxon>Archosauria</taxon>
        <taxon>Dinosauria</taxon>
        <taxon>Saurischia</taxon>
        <taxon>Theropoda</taxon>
        <taxon>Coelurosauria</taxon>
        <taxon>Aves</taxon>
        <taxon>Neognathae</taxon>
        <taxon>Galloanserae</taxon>
        <taxon>Galliformes</taxon>
        <taxon>Phasianidae</taxon>
        <taxon>Phasianinae</taxon>
        <taxon>Gallus</taxon>
    </lineage>
</organism>
<evidence type="ECO:0000250" key="1"/>
<evidence type="ECO:0000250" key="2">
    <source>
        <dbReference type="UniProtKB" id="Q91ZW6"/>
    </source>
</evidence>
<evidence type="ECO:0000250" key="3">
    <source>
        <dbReference type="UniProtKB" id="Q9NVH6"/>
    </source>
</evidence>
<evidence type="ECO:0000255" key="4"/>
<evidence type="ECO:0000305" key="5"/>